<gene>
    <name type="primary">PP2B8</name>
    <name type="ordered locus">At2g02340</name>
    <name type="ORF">T16F16.13</name>
</gene>
<reference key="1">
    <citation type="journal article" date="1999" name="Nature">
        <title>Sequence and analysis of chromosome 2 of the plant Arabidopsis thaliana.</title>
        <authorList>
            <person name="Lin X."/>
            <person name="Kaul S."/>
            <person name="Rounsley S.D."/>
            <person name="Shea T.P."/>
            <person name="Benito M.-I."/>
            <person name="Town C.D."/>
            <person name="Fujii C.Y."/>
            <person name="Mason T.M."/>
            <person name="Bowman C.L."/>
            <person name="Barnstead M.E."/>
            <person name="Feldblyum T.V."/>
            <person name="Buell C.R."/>
            <person name="Ketchum K.A."/>
            <person name="Lee J.J."/>
            <person name="Ronning C.M."/>
            <person name="Koo H.L."/>
            <person name="Moffat K.S."/>
            <person name="Cronin L.A."/>
            <person name="Shen M."/>
            <person name="Pai G."/>
            <person name="Van Aken S."/>
            <person name="Umayam L."/>
            <person name="Tallon L.J."/>
            <person name="Gill J.E."/>
            <person name="Adams M.D."/>
            <person name="Carrera A.J."/>
            <person name="Creasy T.H."/>
            <person name="Goodman H.M."/>
            <person name="Somerville C.R."/>
            <person name="Copenhaver G.P."/>
            <person name="Preuss D."/>
            <person name="Nierman W.C."/>
            <person name="White O."/>
            <person name="Eisen J.A."/>
            <person name="Salzberg S.L."/>
            <person name="Fraser C.M."/>
            <person name="Venter J.C."/>
        </authorList>
    </citation>
    <scope>NUCLEOTIDE SEQUENCE [LARGE SCALE GENOMIC DNA]</scope>
    <source>
        <strain>cv. Columbia</strain>
    </source>
</reference>
<reference key="2">
    <citation type="journal article" date="2017" name="Plant J.">
        <title>Araport11: a complete reannotation of the Arabidopsis thaliana reference genome.</title>
        <authorList>
            <person name="Cheng C.Y."/>
            <person name="Krishnakumar V."/>
            <person name="Chan A.P."/>
            <person name="Thibaud-Nissen F."/>
            <person name="Schobel S."/>
            <person name="Town C.D."/>
        </authorList>
    </citation>
    <scope>GENOME REANNOTATION</scope>
    <source>
        <strain>cv. Columbia</strain>
    </source>
</reference>
<reference key="3">
    <citation type="journal article" date="2003" name="Plant Physiol.">
        <title>Diversity of the superfamily of phloem lectins (phloem protein 2) in angiosperms.</title>
        <authorList>
            <person name="Dinant S."/>
            <person name="Clark A.M."/>
            <person name="Zhu Y."/>
            <person name="Vilaine F."/>
            <person name="Palauqui J.-C."/>
            <person name="Kusiak C."/>
            <person name="Thompson G.A."/>
        </authorList>
    </citation>
    <scope>GENE FAMILY</scope>
    <scope>NOMENCLATURE</scope>
</reference>
<organism>
    <name type="scientific">Arabidopsis thaliana</name>
    <name type="common">Mouse-ear cress</name>
    <dbReference type="NCBI Taxonomy" id="3702"/>
    <lineage>
        <taxon>Eukaryota</taxon>
        <taxon>Viridiplantae</taxon>
        <taxon>Streptophyta</taxon>
        <taxon>Embryophyta</taxon>
        <taxon>Tracheophyta</taxon>
        <taxon>Spermatophyta</taxon>
        <taxon>Magnoliopsida</taxon>
        <taxon>eudicotyledons</taxon>
        <taxon>Gunneridae</taxon>
        <taxon>Pentapetalae</taxon>
        <taxon>rosids</taxon>
        <taxon>malvids</taxon>
        <taxon>Brassicales</taxon>
        <taxon>Brassicaceae</taxon>
        <taxon>Camelineae</taxon>
        <taxon>Arabidopsis</taxon>
    </lineage>
</organism>
<evidence type="ECO:0000255" key="1">
    <source>
        <dbReference type="PROSITE-ProRule" id="PRU00080"/>
    </source>
</evidence>
<keyword id="KW-1185">Reference proteome</keyword>
<protein>
    <recommendedName>
        <fullName>Putative F-box protein PP2-B8</fullName>
    </recommendedName>
    <alternativeName>
        <fullName>Protein PHLOEM PROTEIN 2-LIKE B8</fullName>
        <shortName>AtPP2-B8</shortName>
    </alternativeName>
</protein>
<feature type="chain" id="PRO_0000272217" description="Putative F-box protein PP2-B8">
    <location>
        <begin position="1"/>
        <end position="305"/>
    </location>
</feature>
<feature type="domain" description="F-box" evidence="1">
    <location>
        <begin position="33"/>
        <end position="79"/>
    </location>
</feature>
<dbReference type="EMBL" id="AC005312">
    <property type="protein sequence ID" value="AAC78516.1"/>
    <property type="molecule type" value="Genomic_DNA"/>
</dbReference>
<dbReference type="EMBL" id="CP002685">
    <property type="protein sequence ID" value="AEC05567.1"/>
    <property type="molecule type" value="Genomic_DNA"/>
</dbReference>
<dbReference type="PIR" id="E84435">
    <property type="entry name" value="E84435"/>
</dbReference>
<dbReference type="SMR" id="Q9ZVQ8"/>
<dbReference type="FunCoup" id="Q9ZVQ8">
    <property type="interactions" value="19"/>
</dbReference>
<dbReference type="STRING" id="3702.Q9ZVQ8"/>
<dbReference type="PaxDb" id="3702-AT2G02340.1"/>
<dbReference type="EnsemblPlants" id="AT2G02340.1">
    <property type="protein sequence ID" value="AT2G02340.1"/>
    <property type="gene ID" value="AT2G02340"/>
</dbReference>
<dbReference type="GeneID" id="814765"/>
<dbReference type="Gramene" id="AT2G02340.1">
    <property type="protein sequence ID" value="AT2G02340.1"/>
    <property type="gene ID" value="AT2G02340"/>
</dbReference>
<dbReference type="KEGG" id="ath:AT2G02340"/>
<dbReference type="Araport" id="AT2G02340"/>
<dbReference type="TAIR" id="AT2G02340">
    <property type="gene designation" value="PP2-B8"/>
</dbReference>
<dbReference type="eggNOG" id="ENOG502QRA4">
    <property type="taxonomic scope" value="Eukaryota"/>
</dbReference>
<dbReference type="HOGENOM" id="CLU_050973_0_0_1"/>
<dbReference type="InParanoid" id="Q9ZVQ8"/>
<dbReference type="OMA" id="ANAKRCI"/>
<dbReference type="PhylomeDB" id="Q9ZVQ8"/>
<dbReference type="PRO" id="PR:Q9ZVQ8"/>
<dbReference type="Proteomes" id="UP000006548">
    <property type="component" value="Chromosome 2"/>
</dbReference>
<dbReference type="ExpressionAtlas" id="Q9ZVQ8">
    <property type="expression patterns" value="baseline and differential"/>
</dbReference>
<dbReference type="GO" id="GO:0030246">
    <property type="term" value="F:carbohydrate binding"/>
    <property type="evidence" value="ECO:0000250"/>
    <property type="project" value="TAIR"/>
</dbReference>
<dbReference type="CDD" id="cd22162">
    <property type="entry name" value="F-box_AtSKIP3-like"/>
    <property type="match status" value="1"/>
</dbReference>
<dbReference type="FunFam" id="1.20.1280.50:FF:000112">
    <property type="entry name" value="F-box protein PP2-B1"/>
    <property type="match status" value="1"/>
</dbReference>
<dbReference type="Gene3D" id="1.20.1280.50">
    <property type="match status" value="1"/>
</dbReference>
<dbReference type="InterPro" id="IPR036047">
    <property type="entry name" value="F-box-like_dom_sf"/>
</dbReference>
<dbReference type="InterPro" id="IPR001810">
    <property type="entry name" value="F-box_dom"/>
</dbReference>
<dbReference type="InterPro" id="IPR025886">
    <property type="entry name" value="PP2-like"/>
</dbReference>
<dbReference type="PANTHER" id="PTHR32278">
    <property type="entry name" value="F-BOX DOMAIN-CONTAINING PROTEIN"/>
    <property type="match status" value="1"/>
</dbReference>
<dbReference type="PANTHER" id="PTHR32278:SF119">
    <property type="entry name" value="F-BOX PROTEIN PP2-B10-RELATED"/>
    <property type="match status" value="1"/>
</dbReference>
<dbReference type="Pfam" id="PF00646">
    <property type="entry name" value="F-box"/>
    <property type="match status" value="1"/>
</dbReference>
<dbReference type="Pfam" id="PF14299">
    <property type="entry name" value="PP2"/>
    <property type="match status" value="1"/>
</dbReference>
<dbReference type="SMART" id="SM00256">
    <property type="entry name" value="FBOX"/>
    <property type="match status" value="1"/>
</dbReference>
<dbReference type="SUPFAM" id="SSF81383">
    <property type="entry name" value="F-box domain"/>
    <property type="match status" value="1"/>
</dbReference>
<dbReference type="PROSITE" id="PS50181">
    <property type="entry name" value="FBOX"/>
    <property type="match status" value="1"/>
</dbReference>
<name>PP2B8_ARATH</name>
<proteinExistence type="predicted"/>
<accession>Q9ZVQ8</accession>
<sequence>MTKTRCMHEHFRKIVQRVKKTLRLSASDKSHGVAELDDLPEECVSIIVSFTSPQDACVLASVSKTFASAVKSDIVWEKFIPPEYESLISQSRAFKFLSKKELYFALCDKSVLIDDGKKSLWIEKANAKRCIMISAMNLAIAWGNSPQSWRWIPDPQARFETVAELLEVCLFEIRGRINSRVISPKTRYSAYIVYKKLNICYGFENVAVEVVVGVVGQDLEESCRRYICFDETMDEQFRRRDRGKNLVKPERRKDGWMEIKIGEFFNEGGLLNDDEIEMVALEAKQRHWKRGLIIQGIEIRPTNIR</sequence>